<reference key="1">
    <citation type="journal article" date="2003" name="Proc. Natl. Acad. Sci. U.S.A.">
        <title>Genome sequence of the cyanobacterium Prochlorococcus marinus SS120, a nearly minimal oxyphototrophic genome.</title>
        <authorList>
            <person name="Dufresne A."/>
            <person name="Salanoubat M."/>
            <person name="Partensky F."/>
            <person name="Artiguenave F."/>
            <person name="Axmann I.M."/>
            <person name="Barbe V."/>
            <person name="Duprat S."/>
            <person name="Galperin M.Y."/>
            <person name="Koonin E.V."/>
            <person name="Le Gall F."/>
            <person name="Makarova K.S."/>
            <person name="Ostrowski M."/>
            <person name="Oztas S."/>
            <person name="Robert C."/>
            <person name="Rogozin I.B."/>
            <person name="Scanlan D.J."/>
            <person name="Tandeau de Marsac N."/>
            <person name="Weissenbach J."/>
            <person name="Wincker P."/>
            <person name="Wolf Y.I."/>
            <person name="Hess W.R."/>
        </authorList>
    </citation>
    <scope>NUCLEOTIDE SEQUENCE [LARGE SCALE GENOMIC DNA]</scope>
    <source>
        <strain>SARG / CCMP1375 / SS120</strain>
    </source>
</reference>
<proteinExistence type="inferred from homology"/>
<feature type="chain" id="PRO_0000191158" description="Chaperone protein ClpB">
    <location>
        <begin position="1"/>
        <end position="864"/>
    </location>
</feature>
<feature type="domain" description="Clp R" evidence="2">
    <location>
        <begin position="5"/>
        <end position="147"/>
    </location>
</feature>
<feature type="region of interest" description="Repeat 1" evidence="2">
    <location>
        <begin position="8"/>
        <end position="72"/>
    </location>
</feature>
<feature type="region of interest" description="Repeat 2" evidence="2">
    <location>
        <begin position="84"/>
        <end position="147"/>
    </location>
</feature>
<feature type="region of interest" description="NBD1" evidence="1">
    <location>
        <begin position="160"/>
        <end position="341"/>
    </location>
</feature>
<feature type="region of interest" description="Linker" evidence="1">
    <location>
        <begin position="342"/>
        <end position="552"/>
    </location>
</feature>
<feature type="region of interest" description="NBD2" evidence="1">
    <location>
        <begin position="562"/>
        <end position="773"/>
    </location>
</feature>
<feature type="region of interest" description="C-terminal" evidence="1">
    <location>
        <begin position="774"/>
        <end position="864"/>
    </location>
</feature>
<feature type="coiled-coil region" evidence="1">
    <location>
        <begin position="392"/>
        <end position="526"/>
    </location>
</feature>
<feature type="binding site" evidence="1">
    <location>
        <begin position="207"/>
        <end position="214"/>
    </location>
    <ligand>
        <name>ATP</name>
        <dbReference type="ChEBI" id="CHEBI:30616"/>
        <label>1</label>
    </ligand>
</feature>
<feature type="binding site" evidence="1">
    <location>
        <begin position="612"/>
        <end position="619"/>
    </location>
    <ligand>
        <name>ATP</name>
        <dbReference type="ChEBI" id="CHEBI:30616"/>
        <label>2</label>
    </ligand>
</feature>
<dbReference type="EMBL" id="AE017126">
    <property type="protein sequence ID" value="AAQ00127.1"/>
    <property type="molecule type" value="Genomic_DNA"/>
</dbReference>
<dbReference type="RefSeq" id="NP_875474.1">
    <property type="nucleotide sequence ID" value="NC_005042.1"/>
</dbReference>
<dbReference type="RefSeq" id="WP_011125234.1">
    <property type="nucleotide sequence ID" value="NC_005042.1"/>
</dbReference>
<dbReference type="SMR" id="Q7VBL0"/>
<dbReference type="STRING" id="167539.Pro_1082"/>
<dbReference type="EnsemblBacteria" id="AAQ00127">
    <property type="protein sequence ID" value="AAQ00127"/>
    <property type="gene ID" value="Pro_1082"/>
</dbReference>
<dbReference type="KEGG" id="pma:Pro_1082"/>
<dbReference type="PATRIC" id="fig|167539.5.peg.1132"/>
<dbReference type="eggNOG" id="COG0542">
    <property type="taxonomic scope" value="Bacteria"/>
</dbReference>
<dbReference type="HOGENOM" id="CLU_005070_4_2_3"/>
<dbReference type="OrthoDB" id="9803641at2"/>
<dbReference type="Proteomes" id="UP000001420">
    <property type="component" value="Chromosome"/>
</dbReference>
<dbReference type="GO" id="GO:0005737">
    <property type="term" value="C:cytoplasm"/>
    <property type="evidence" value="ECO:0007669"/>
    <property type="project" value="UniProtKB-SubCell"/>
</dbReference>
<dbReference type="GO" id="GO:0005524">
    <property type="term" value="F:ATP binding"/>
    <property type="evidence" value="ECO:0007669"/>
    <property type="project" value="UniProtKB-KW"/>
</dbReference>
<dbReference type="GO" id="GO:0016887">
    <property type="term" value="F:ATP hydrolysis activity"/>
    <property type="evidence" value="ECO:0007669"/>
    <property type="project" value="InterPro"/>
</dbReference>
<dbReference type="GO" id="GO:0034605">
    <property type="term" value="P:cellular response to heat"/>
    <property type="evidence" value="ECO:0007669"/>
    <property type="project" value="TreeGrafter"/>
</dbReference>
<dbReference type="GO" id="GO:0042026">
    <property type="term" value="P:protein refolding"/>
    <property type="evidence" value="ECO:0007669"/>
    <property type="project" value="InterPro"/>
</dbReference>
<dbReference type="CDD" id="cd00009">
    <property type="entry name" value="AAA"/>
    <property type="match status" value="1"/>
</dbReference>
<dbReference type="CDD" id="cd19499">
    <property type="entry name" value="RecA-like_ClpB_Hsp104-like"/>
    <property type="match status" value="1"/>
</dbReference>
<dbReference type="FunFam" id="3.40.50.300:FF:000120">
    <property type="entry name" value="ATP-dependent chaperone ClpB"/>
    <property type="match status" value="1"/>
</dbReference>
<dbReference type="FunFam" id="3.40.50.300:FF:000025">
    <property type="entry name" value="ATP-dependent Clp protease subunit"/>
    <property type="match status" value="1"/>
</dbReference>
<dbReference type="FunFam" id="3.40.50.300:FF:000010">
    <property type="entry name" value="Chaperone clpB 1, putative"/>
    <property type="match status" value="1"/>
</dbReference>
<dbReference type="Gene3D" id="1.10.8.60">
    <property type="match status" value="1"/>
</dbReference>
<dbReference type="Gene3D" id="1.10.1780.10">
    <property type="entry name" value="Clp, N-terminal domain"/>
    <property type="match status" value="1"/>
</dbReference>
<dbReference type="Gene3D" id="3.40.50.300">
    <property type="entry name" value="P-loop containing nucleotide triphosphate hydrolases"/>
    <property type="match status" value="3"/>
</dbReference>
<dbReference type="InterPro" id="IPR003593">
    <property type="entry name" value="AAA+_ATPase"/>
</dbReference>
<dbReference type="InterPro" id="IPR003959">
    <property type="entry name" value="ATPase_AAA_core"/>
</dbReference>
<dbReference type="InterPro" id="IPR017730">
    <property type="entry name" value="Chaperonin_ClpB"/>
</dbReference>
<dbReference type="InterPro" id="IPR019489">
    <property type="entry name" value="Clp_ATPase_C"/>
</dbReference>
<dbReference type="InterPro" id="IPR036628">
    <property type="entry name" value="Clp_N_dom_sf"/>
</dbReference>
<dbReference type="InterPro" id="IPR004176">
    <property type="entry name" value="Clp_R_dom"/>
</dbReference>
<dbReference type="InterPro" id="IPR001270">
    <property type="entry name" value="ClpA/B"/>
</dbReference>
<dbReference type="InterPro" id="IPR018368">
    <property type="entry name" value="ClpA/B_CS1"/>
</dbReference>
<dbReference type="InterPro" id="IPR028299">
    <property type="entry name" value="ClpA/B_CS2"/>
</dbReference>
<dbReference type="InterPro" id="IPR041546">
    <property type="entry name" value="ClpA/ClpB_AAA_lid"/>
</dbReference>
<dbReference type="InterPro" id="IPR050130">
    <property type="entry name" value="ClpA_ClpB"/>
</dbReference>
<dbReference type="InterPro" id="IPR027417">
    <property type="entry name" value="P-loop_NTPase"/>
</dbReference>
<dbReference type="NCBIfam" id="TIGR03346">
    <property type="entry name" value="chaperone_ClpB"/>
    <property type="match status" value="1"/>
</dbReference>
<dbReference type="PANTHER" id="PTHR11638">
    <property type="entry name" value="ATP-DEPENDENT CLP PROTEASE"/>
    <property type="match status" value="1"/>
</dbReference>
<dbReference type="PANTHER" id="PTHR11638:SF18">
    <property type="entry name" value="HEAT SHOCK PROTEIN 104"/>
    <property type="match status" value="1"/>
</dbReference>
<dbReference type="Pfam" id="PF00004">
    <property type="entry name" value="AAA"/>
    <property type="match status" value="1"/>
</dbReference>
<dbReference type="Pfam" id="PF07724">
    <property type="entry name" value="AAA_2"/>
    <property type="match status" value="1"/>
</dbReference>
<dbReference type="Pfam" id="PF17871">
    <property type="entry name" value="AAA_lid_9"/>
    <property type="match status" value="1"/>
</dbReference>
<dbReference type="Pfam" id="PF02861">
    <property type="entry name" value="Clp_N"/>
    <property type="match status" value="2"/>
</dbReference>
<dbReference type="Pfam" id="PF10431">
    <property type="entry name" value="ClpB_D2-small"/>
    <property type="match status" value="1"/>
</dbReference>
<dbReference type="PRINTS" id="PR00300">
    <property type="entry name" value="CLPPROTEASEA"/>
</dbReference>
<dbReference type="SMART" id="SM00382">
    <property type="entry name" value="AAA"/>
    <property type="match status" value="2"/>
</dbReference>
<dbReference type="SMART" id="SM01086">
    <property type="entry name" value="ClpB_D2-small"/>
    <property type="match status" value="1"/>
</dbReference>
<dbReference type="SUPFAM" id="SSF81923">
    <property type="entry name" value="Double Clp-N motif"/>
    <property type="match status" value="1"/>
</dbReference>
<dbReference type="SUPFAM" id="SSF52540">
    <property type="entry name" value="P-loop containing nucleoside triphosphate hydrolases"/>
    <property type="match status" value="2"/>
</dbReference>
<dbReference type="PROSITE" id="PS51903">
    <property type="entry name" value="CLP_R"/>
    <property type="match status" value="1"/>
</dbReference>
<dbReference type="PROSITE" id="PS00870">
    <property type="entry name" value="CLPAB_1"/>
    <property type="match status" value="1"/>
</dbReference>
<dbReference type="PROSITE" id="PS00871">
    <property type="entry name" value="CLPAB_2"/>
    <property type="match status" value="1"/>
</dbReference>
<name>CLPB_PROMA</name>
<sequence>MDIKTDNFTEESWSSILQAQSNAKGFHHQYIETEHLLKSLIQENDLAKSIIKKCNGSIDQIKMHLNDFIKNQPKLKERPENLFIGKHLQKTINESDQIKQSFDDDFISIEHLLIALSKDQRCCNKILIHEKIDPEILLKSIAEIRGNQKVTDQNPESKYESLKKYGRDLTSAAREGILDPVIGRDDEIRRTIQILSRRTKNNPVLIGEPGVGKTAIVEGLAQRIINGDVPSALQNRQLIALDMGALIAGAKYRGEFEERLKAVLKEVTSSQGQIVLFIDEIHTVVGAGATGGAMDASNLLKPMLARGELRCIGATTINEHRQHIEKDPALERRFQQVLISEPSIEDTISILRGLKEKYEVHHGVRISDSALVAAAVLSNRYISERYLPDKAIDLIDESASKLKMEITSKPEELDEIDRKIIQLQMEKLSLKRESNLASQEKLNAIDNGLNELKSKQSSLNKQWQEEKESINTLSFLKEEIEKVQLQIEQAKRDYDLNRAAELEYGTLNSLQNKLKQKEDLIMVNNNNDQKSLLLREEVTENDITEVIAKWTSIPLTKLLKSDIEKLLDLEDKLNSKVIGQKQAVQAVADSIQRSRTGLSDPSRPMGSFLLLGPTGVGKTELSKSLAKELFDSEKAMIRIDMSEYMEKHSISRLIGAPPGYVGYESGGQLSEAVRRNPYSVILFDEVEKANSDVLNIMLQILDEGRLTDGKGKNINFKNTIIILTSNVGSESIIEMTNKKNEYELIEEVVRNQLKNYFKPEFLNRLDEQIIFKSLKKEDLKKIVKLQIDKVKARLKDKGLEIELNEKVIDWIADKGYNPIYGARPIKRIIQTKLETKLAKMILKSKSEERSHYQLDIIDDQIVFN</sequence>
<comment type="function">
    <text evidence="1">Part of a stress-induced multi-chaperone system, it is involved in the recovery of the cell from heat-induced damage, in cooperation with DnaK, DnaJ and GrpE. Acts before DnaK, in the processing of protein aggregates. Protein binding stimulates the ATPase activity; ATP hydrolysis unfolds the denatured protein aggregates, which probably helps expose new hydrophobic binding sites on the surface of ClpB-bound aggregates, contributing to the solubilization and refolding of denatured protein aggregates by DnaK (By similarity).</text>
</comment>
<comment type="subunit">
    <text evidence="1">Homohexamer. The oligomerization is ATP-dependent (By similarity).</text>
</comment>
<comment type="subcellular location">
    <subcellularLocation>
        <location evidence="3">Cytoplasm</location>
    </subcellularLocation>
</comment>
<comment type="domain">
    <text evidence="1">The Clp repeat (R) domain probably functions as a substrate-discriminating domain, recruiting aggregated proteins to the ClpB hexamer and/or stabilizing bound proteins. The NBD2 domain is responsible for oligomerization, whereas the NBD1 domain stabilizes the hexamer probably in an ATP-dependent manner. The movement of the coiled-coil domain is essential for ClpB ability to rescue proteins from an aggregated state, probably by pulling apart large aggregated proteins, which are bound between the coiled-coils motifs of adjacent ClpB subunits in the functional hexamer (By similarity).</text>
</comment>
<comment type="similarity">
    <text evidence="3">Belongs to the ClpA/ClpB family.</text>
</comment>
<evidence type="ECO:0000250" key="1"/>
<evidence type="ECO:0000255" key="2">
    <source>
        <dbReference type="PROSITE-ProRule" id="PRU01251"/>
    </source>
</evidence>
<evidence type="ECO:0000305" key="3"/>
<accession>Q7VBL0</accession>
<protein>
    <recommendedName>
        <fullName>Chaperone protein ClpB</fullName>
    </recommendedName>
</protein>
<organism>
    <name type="scientific">Prochlorococcus marinus (strain SARG / CCMP1375 / SS120)</name>
    <dbReference type="NCBI Taxonomy" id="167539"/>
    <lineage>
        <taxon>Bacteria</taxon>
        <taxon>Bacillati</taxon>
        <taxon>Cyanobacteriota</taxon>
        <taxon>Cyanophyceae</taxon>
        <taxon>Synechococcales</taxon>
        <taxon>Prochlorococcaceae</taxon>
        <taxon>Prochlorococcus</taxon>
    </lineage>
</organism>
<gene>
    <name type="primary">clpB</name>
    <name type="ordered locus">Pro_1082</name>
</gene>
<keyword id="KW-0067">ATP-binding</keyword>
<keyword id="KW-0143">Chaperone</keyword>
<keyword id="KW-0175">Coiled coil</keyword>
<keyword id="KW-0963">Cytoplasm</keyword>
<keyword id="KW-0547">Nucleotide-binding</keyword>
<keyword id="KW-1185">Reference proteome</keyword>
<keyword id="KW-0677">Repeat</keyword>
<keyword id="KW-0346">Stress response</keyword>